<protein>
    <recommendedName>
        <fullName evidence="1">ATPase ASNA1 homolog</fullName>
        <ecNumber evidence="1">3.6.-.-</ecNumber>
    </recommendedName>
    <alternativeName>
        <fullName evidence="1">Arsenical pump-driving ATPase homolog</fullName>
    </alternativeName>
    <alternativeName>
        <fullName evidence="1">Arsenite-stimulated ATPase</fullName>
    </alternativeName>
</protein>
<organism>
    <name type="scientific">Plasmodium berghei (strain Anka)</name>
    <dbReference type="NCBI Taxonomy" id="5823"/>
    <lineage>
        <taxon>Eukaryota</taxon>
        <taxon>Sar</taxon>
        <taxon>Alveolata</taxon>
        <taxon>Apicomplexa</taxon>
        <taxon>Aconoidasida</taxon>
        <taxon>Haemosporida</taxon>
        <taxon>Plasmodiidae</taxon>
        <taxon>Plasmodium</taxon>
        <taxon>Plasmodium (Vinckeia)</taxon>
    </lineage>
</organism>
<sequence>MSKAGSDVSSISCSLSLDSDSCEDEYYETNLNKLIENTSLNWIFVGGKGGVGKTTTSCSIAIQLAKKRESVLLLSTDPAHNTSDAFNQKFTNKPTLINSFDNLYCMEIDTTFSEDTAFKINKSDFFNSIIPELLQSFPGIDEALCFAELMQSIKNMKYSVIVFDTAPTGHTLRLLAFPDLLKKALGYLINLKEKLKGTLSMLQSLTNNEMEFEGMYDKINHLNTMSISIQENFQNPLKTTFVCVCIPEFLSVYETERLIQELTKKNISCYNIVVNQVVFPLTSPDVNIEKCEKLLKQIKDTNIQNSFNSLILKAKELEDVYISRRKLQSKYLTQIKNLYGNYFHIVCMPQLKTEIRGLDKISNFSEMLLQSKDIPIYST</sequence>
<reference evidence="3" key="1">
    <citation type="journal article" date="2014" name="BMC Biol.">
        <title>A comprehensive evaluation of rodent malaria parasite genomes and gene expression.</title>
        <authorList>
            <person name="Otto T.D."/>
            <person name="Bohme U."/>
            <person name="Jackson A.P."/>
            <person name="Hunt M."/>
            <person name="Franke-Fayard B."/>
            <person name="Hoeijmakers W.A."/>
            <person name="Religa A.A."/>
            <person name="Robertson L."/>
            <person name="Sanders M."/>
            <person name="Ogun S.A."/>
            <person name="Cunningham D."/>
            <person name="Erhart A."/>
            <person name="Billker O."/>
            <person name="Khan S.M."/>
            <person name="Stunnenberg H.G."/>
            <person name="Langhorne J."/>
            <person name="Holder A.A."/>
            <person name="Waters A.P."/>
            <person name="Newbold C.I."/>
            <person name="Pain A."/>
            <person name="Berriman M."/>
            <person name="Janse C.J."/>
        </authorList>
    </citation>
    <scope>NUCLEOTIDE SEQUENCE [LARGE SCALE GENOMIC DNA]</scope>
    <source>
        <strain evidence="3">ANKA</strain>
    </source>
</reference>
<evidence type="ECO:0000255" key="1">
    <source>
        <dbReference type="HAMAP-Rule" id="MF_03112"/>
    </source>
</evidence>
<evidence type="ECO:0000312" key="2">
    <source>
        <dbReference type="EMBL" id="VUC55096.1"/>
    </source>
</evidence>
<evidence type="ECO:0000312" key="3">
    <source>
        <dbReference type="Proteomes" id="UP000074855"/>
    </source>
</evidence>
<comment type="function">
    <text evidence="1">ATPase required for the post-translational delivery of tail-anchored (TA) proteins to the endoplasmic reticulum. Recognizes and selectively binds the transmembrane domain of TA proteins in the cytosol. This complex then targets to the endoplasmic reticulum by membrane-bound receptors, where the tail-anchored protein is released for insertion. This process is regulated by ATP binding and hydrolysis. ATP binding drives the homodimer towards the closed dimer state, facilitating recognition of newly synthesized TA membrane proteins. ATP hydrolysis is required for insertion. Subsequently, the homodimer reverts towards the open dimer state, lowering its affinity for the membrane-bound receptor, and returning it to the cytosol to initiate a new round of targeting.</text>
</comment>
<comment type="subunit">
    <text evidence="1">Homodimer.</text>
</comment>
<comment type="subcellular location">
    <subcellularLocation>
        <location evidence="1">Cytoplasm</location>
    </subcellularLocation>
    <subcellularLocation>
        <location evidence="1">Endoplasmic reticulum</location>
    </subcellularLocation>
</comment>
<comment type="similarity">
    <text evidence="1">Belongs to the arsA ATPase family.</text>
</comment>
<dbReference type="EC" id="3.6.-.-" evidence="1"/>
<dbReference type="EMBL" id="LK023122">
    <property type="protein sequence ID" value="VUC55096.1"/>
    <property type="molecule type" value="Genomic_DNA"/>
</dbReference>
<dbReference type="RefSeq" id="XP_677790.1">
    <property type="nucleotide sequence ID" value="XM_672698.1"/>
</dbReference>
<dbReference type="SMR" id="Q4YVP3"/>
<dbReference type="STRING" id="5823.A0A509AJX9"/>
<dbReference type="VEuPathDB" id="PlasmoDB:PBANKA_0717000"/>
<dbReference type="eggNOG" id="KOG2825">
    <property type="taxonomic scope" value="Eukaryota"/>
</dbReference>
<dbReference type="HOGENOM" id="CLU_040761_0_0_1"/>
<dbReference type="InParanoid" id="A0A509AJX9"/>
<dbReference type="OMA" id="IGNNEPR"/>
<dbReference type="Proteomes" id="UP000074855">
    <property type="component" value="Chromosome 7"/>
</dbReference>
<dbReference type="GO" id="GO:0043529">
    <property type="term" value="C:GET complex"/>
    <property type="evidence" value="ECO:0007669"/>
    <property type="project" value="TreeGrafter"/>
</dbReference>
<dbReference type="GO" id="GO:0005524">
    <property type="term" value="F:ATP binding"/>
    <property type="evidence" value="ECO:0007669"/>
    <property type="project" value="UniProtKB-UniRule"/>
</dbReference>
<dbReference type="GO" id="GO:0016887">
    <property type="term" value="F:ATP hydrolysis activity"/>
    <property type="evidence" value="ECO:0007669"/>
    <property type="project" value="InterPro"/>
</dbReference>
<dbReference type="GO" id="GO:0071816">
    <property type="term" value="P:tail-anchored membrane protein insertion into ER membrane"/>
    <property type="evidence" value="ECO:0007669"/>
    <property type="project" value="TreeGrafter"/>
</dbReference>
<dbReference type="CDD" id="cd02035">
    <property type="entry name" value="ArsA"/>
    <property type="match status" value="1"/>
</dbReference>
<dbReference type="FunFam" id="3.40.50.300:FF:001459">
    <property type="entry name" value="ATPase ASNA1 homolog"/>
    <property type="match status" value="1"/>
</dbReference>
<dbReference type="Gene3D" id="3.40.50.300">
    <property type="entry name" value="P-loop containing nucleotide triphosphate hydrolases"/>
    <property type="match status" value="1"/>
</dbReference>
<dbReference type="HAMAP" id="MF_03112">
    <property type="entry name" value="Asna1_Get3"/>
    <property type="match status" value="1"/>
</dbReference>
<dbReference type="InterPro" id="IPR025723">
    <property type="entry name" value="Anion-transp_ATPase-like_dom"/>
</dbReference>
<dbReference type="InterPro" id="IPR016300">
    <property type="entry name" value="ATPase_ArsA/GET3"/>
</dbReference>
<dbReference type="InterPro" id="IPR027542">
    <property type="entry name" value="ATPase_ArsA/GET3_euk"/>
</dbReference>
<dbReference type="InterPro" id="IPR027417">
    <property type="entry name" value="P-loop_NTPase"/>
</dbReference>
<dbReference type="NCBIfam" id="TIGR00345">
    <property type="entry name" value="GET3_arsA_TRC40"/>
    <property type="match status" value="1"/>
</dbReference>
<dbReference type="PANTHER" id="PTHR10803">
    <property type="entry name" value="ARSENICAL PUMP-DRIVING ATPASE ARSENITE-TRANSLOCATING ATPASE"/>
    <property type="match status" value="1"/>
</dbReference>
<dbReference type="PANTHER" id="PTHR10803:SF3">
    <property type="entry name" value="ATPASE GET3"/>
    <property type="match status" value="1"/>
</dbReference>
<dbReference type="Pfam" id="PF02374">
    <property type="entry name" value="ArsA_ATPase"/>
    <property type="match status" value="2"/>
</dbReference>
<dbReference type="SUPFAM" id="SSF52540">
    <property type="entry name" value="P-loop containing nucleoside triphosphate hydrolases"/>
    <property type="match status" value="1"/>
</dbReference>
<proteinExistence type="inferred from homology"/>
<keyword id="KW-0067">ATP-binding</keyword>
<keyword id="KW-0963">Cytoplasm</keyword>
<keyword id="KW-0256">Endoplasmic reticulum</keyword>
<keyword id="KW-0378">Hydrolase</keyword>
<keyword id="KW-0547">Nucleotide-binding</keyword>
<keyword id="KW-1185">Reference proteome</keyword>
<keyword id="KW-0813">Transport</keyword>
<accession>Q4YVP3</accession>
<accession>A0A509AJX9</accession>
<name>ASNA_PLABA</name>
<feature type="chain" id="PRO_0000388169" description="ATPase ASNA1 homolog">
    <location>
        <begin position="1"/>
        <end position="379"/>
    </location>
</feature>
<feature type="active site" evidence="1">
    <location>
        <position position="77"/>
    </location>
</feature>
<feature type="binding site" evidence="1">
    <location>
        <begin position="48"/>
        <end position="55"/>
    </location>
    <ligand>
        <name>ATP</name>
        <dbReference type="ChEBI" id="CHEBI:30616"/>
    </ligand>
</feature>
<feature type="binding site" evidence="1">
    <location>
        <position position="248"/>
    </location>
    <ligand>
        <name>ATP</name>
        <dbReference type="ChEBI" id="CHEBI:30616"/>
    </ligand>
</feature>
<feature type="binding site" evidence="1">
    <location>
        <position position="275"/>
    </location>
    <ligand>
        <name>ATP</name>
        <dbReference type="ChEBI" id="CHEBI:30616"/>
    </ligand>
</feature>
<gene>
    <name type="primary">GET3</name>
    <name type="ORF">PB000618.02.0</name>
    <name evidence="2" type="ORF">PBANKA_0717000</name>
</gene>